<dbReference type="EMBL" id="AF036333">
    <property type="protein sequence ID" value="AAC18002.1"/>
    <property type="molecule type" value="Genomic_DNA"/>
</dbReference>
<dbReference type="EMBL" id="AF036333">
    <property type="protein sequence ID" value="AAC18001.1"/>
    <property type="molecule type" value="Genomic_DNA"/>
</dbReference>
<dbReference type="RefSeq" id="NP_046815.1">
    <molecule id="O71155-1"/>
    <property type="nucleotide sequence ID" value="NC_001899.1"/>
</dbReference>
<dbReference type="RefSeq" id="NP_046816.1">
    <molecule id="O71155-2"/>
    <property type="nucleotide sequence ID" value="NC_001899.1"/>
</dbReference>
<dbReference type="SMR" id="O71155"/>
<dbReference type="KEGG" id="vg:1449602"/>
<dbReference type="KEGG" id="vg:1449606"/>
<dbReference type="OrthoDB" id="547at10239"/>
<dbReference type="Proteomes" id="UP000007205">
    <property type="component" value="Genome"/>
</dbReference>
<dbReference type="GO" id="GO:0039615">
    <property type="term" value="C:T=1 icosahedral viral capsid"/>
    <property type="evidence" value="ECO:0007669"/>
    <property type="project" value="UniProtKB-KW"/>
</dbReference>
<dbReference type="GO" id="GO:0005198">
    <property type="term" value="F:structural molecule activity"/>
    <property type="evidence" value="ECO:0007669"/>
    <property type="project" value="InterPro"/>
</dbReference>
<dbReference type="GO" id="GO:0075512">
    <property type="term" value="P:clathrin-dependent endocytosis of virus by host cell"/>
    <property type="evidence" value="ECO:0007669"/>
    <property type="project" value="UniProtKB-KW"/>
</dbReference>
<dbReference type="GO" id="GO:0140267">
    <property type="term" value="P:symbiont entry into host cell via permeabilization of host membrane"/>
    <property type="evidence" value="ECO:0007669"/>
    <property type="project" value="UniProtKB-KW"/>
</dbReference>
<dbReference type="GO" id="GO:0019062">
    <property type="term" value="P:virion attachment to host cell"/>
    <property type="evidence" value="ECO:0007669"/>
    <property type="project" value="UniProtKB-KW"/>
</dbReference>
<dbReference type="InterPro" id="IPR016184">
    <property type="entry name" value="Capsid/spike_ssDNA_virus"/>
</dbReference>
<dbReference type="InterPro" id="IPR003433">
    <property type="entry name" value="Capsid_VP4_densovirus"/>
</dbReference>
<dbReference type="InterPro" id="IPR013607">
    <property type="entry name" value="Phospholipase_A2-like"/>
</dbReference>
<dbReference type="Pfam" id="PF02336">
    <property type="entry name" value="Denso_VP4"/>
    <property type="match status" value="1"/>
</dbReference>
<dbReference type="Pfam" id="PF08398">
    <property type="entry name" value="Phospholip_A2_4"/>
    <property type="match status" value="1"/>
</dbReference>
<dbReference type="SUPFAM" id="SSF88645">
    <property type="entry name" value="ssDNA viruses"/>
    <property type="match status" value="1"/>
</dbReference>
<organism>
    <name type="scientific">Diatraea saccharalis densovirus</name>
    <name type="common">DsDNV</name>
    <dbReference type="NCBI Taxonomy" id="72003"/>
    <lineage>
        <taxon>Viruses</taxon>
        <taxon>Monodnaviria</taxon>
        <taxon>Shotokuvirae</taxon>
        <taxon>Cossaviricota</taxon>
        <taxon>Quintoviricetes</taxon>
        <taxon>Piccovirales</taxon>
        <taxon>Parvoviridae</taxon>
        <taxon>Densovirinae</taxon>
    </lineage>
</organism>
<name>CAPSD_DSDNV</name>
<gene>
    <name type="primary">VP</name>
</gene>
<reference key="1">
    <citation type="submission" date="1997-12" db="EMBL/GenBank/DDBJ databases">
        <title>Complete nucleotide sequence and genome organization of an infectious clone of Diatraea saccharalis densovirus (DsDNV).</title>
        <authorList>
            <person name="Boublik Y."/>
            <person name="Kouassi K.N."/>
            <person name="Cavallaro C."/>
            <person name="Bergoin M."/>
        </authorList>
    </citation>
    <scope>NUCLEOTIDE SEQUENCE [GENOMIC DNA]</scope>
</reference>
<protein>
    <recommendedName>
        <fullName>Capsid protein VP1</fullName>
    </recommendedName>
    <alternativeName>
        <fullName>Coat protein VP1</fullName>
    </alternativeName>
    <alternativeName>
        <fullName>Structural protein VP1</fullName>
    </alternativeName>
</protein>
<keyword id="KW-0024">Alternative initiation</keyword>
<keyword id="KW-0167">Capsid protein</keyword>
<keyword id="KW-1165">Clathrin-mediated endocytosis of virus by host</keyword>
<keyword id="KW-0945">Host-virus interaction</keyword>
<keyword id="KW-1140">T=1 icosahedral capsid protein</keyword>
<keyword id="KW-1161">Viral attachment to host cell</keyword>
<keyword id="KW-1162">Viral penetration into host cytoplasm</keyword>
<keyword id="KW-1173">Viral penetration via permeabilization of host membrane</keyword>
<keyword id="KW-0946">Virion</keyword>
<keyword id="KW-1164">Virus endocytosis by host</keyword>
<keyword id="KW-1160">Virus entry into host cell</keyword>
<feature type="chain" id="PRO_0000039447" description="Capsid protein VP1">
    <location>
        <begin position="1"/>
        <end position="809"/>
    </location>
</feature>
<feature type="region of interest" description="Disordered" evidence="2">
    <location>
        <begin position="315"/>
        <end position="366"/>
    </location>
</feature>
<feature type="region of interest" description="Disordered" evidence="2">
    <location>
        <begin position="373"/>
        <end position="392"/>
    </location>
</feature>
<feature type="compositionally biased region" description="Polar residues" evidence="2">
    <location>
        <begin position="315"/>
        <end position="325"/>
    </location>
</feature>
<feature type="compositionally biased region" description="Polar residues" evidence="2">
    <location>
        <begin position="346"/>
        <end position="365"/>
    </location>
</feature>
<feature type="compositionally biased region" description="Gly residues" evidence="2">
    <location>
        <begin position="379"/>
        <end position="390"/>
    </location>
</feature>
<feature type="splice variant" id="VSP_018949" description="In isoform VP4." evidence="3">
    <location>
        <begin position="1"/>
        <end position="373"/>
    </location>
</feature>
<feature type="splice variant" id="VSP_018948" description="In isoform VP3." evidence="3">
    <location>
        <begin position="1"/>
        <end position="322"/>
    </location>
</feature>
<feature type="splice variant" id="VSP_018947" description="In isoform VP2." evidence="3">
    <location>
        <begin position="1"/>
        <end position="277"/>
    </location>
</feature>
<evidence type="ECO:0000250" key="1"/>
<evidence type="ECO:0000256" key="2">
    <source>
        <dbReference type="SAM" id="MobiDB-lite"/>
    </source>
</evidence>
<evidence type="ECO:0000305" key="3"/>
<comment type="function">
    <text evidence="1">Capsid protein self-assembles to form an icosahedral capsid with a T=1 symmetry, about 22 nm in diameter, and consisting of 60 copies of size variants of the capsid proteins, which differ in the N-terminushe capsid encapsulates the genomic ssDNA. Capsid proteins are responsible for the attachment to host cell receptors. This attachment induces virion internalization predominantly through clathrin-dependent endocytosis (By similarity).</text>
</comment>
<comment type="subcellular location">
    <subcellularLocation>
        <location evidence="3">Virion</location>
    </subcellularLocation>
</comment>
<comment type="alternative products">
    <event type="alternative initiation"/>
    <isoform>
        <id>O71155-1</id>
        <name>VP1</name>
        <sequence type="displayed"/>
    </isoform>
    <isoform>
        <id>O71155-2</id>
        <name>VP2</name>
        <sequence type="described" ref="VSP_018947"/>
    </isoform>
    <isoform>
        <id>O71155-3</id>
        <name>VP3</name>
        <sequence type="described" ref="VSP_018948"/>
    </isoform>
    <isoform>
        <id>O71155-4</id>
        <name>VP4</name>
        <sequence type="described" ref="VSP_018949"/>
    </isoform>
</comment>
<comment type="domain">
    <text>The N-terminus of VP1 is sequestered within the mature capsid. It contains a phospholipase A2-like region and putative nuclear localization signals.</text>
</comment>
<organismHost>
    <name type="scientific">Diatraea saccharalis</name>
    <name type="common">sugarcane borer</name>
    <dbReference type="NCBI Taxonomy" id="40085"/>
</organismHost>
<proteinExistence type="inferred from homology"/>
<accession>O71155</accession>
<accession>O92824</accession>
<sequence>MSFYARALTHRARPGYRIIPENTVTEDIELGAIGEETPLLSEGIITAAEETAAVGLPELGVGAVGAVGTHADVLYRNRNAFKSVLTGNYTDLKGNPLKQRNAISEKTKQLGKQIFQGDFNRAFPDNLKLETEQEKTDLLRYYNHNRRLAGLSEAYPQGKGYAYAKSQKVLEAEKRGLTVPGYKYLGPGNSLNRGPPTNEIDADAKEHDEAYSQSKTAQEVSKADNTFVNKALDHVVNAINLKESPSNTVGAIIGATGIGTKQAIEKHTGVIYPSVSGMSREINPKYLNSWSDWIKENKPNNFAGIQLPEDFYTEEQTLSDSPMSESTKRKADTPAEETPSKKGAHNTDSSSQSADPQNPSSSGATTDLDVTMAMSLPGTGSGTSSGGGNTTGQEIYEIPRPFTNFGKKLSTYTKSHKFMIFGLANNVIAETGTTGNLHRLLTTCLAEIPWQKIPLYMNQSEFDLLPPGSRIVECNVKVIFRSNRIAFETSSTATKQATLNQISNLQTAVGLNKLGWGIDRSFTAFQSDQPMIPTASAPPKYASVSGANGYRGMIADYYGADSNNDIAFGNAGNYPHHQVGSFTFLQNYYCMYIQTERGTGGWPCLAEHFQQYDSKTVNNQCLLDVSYKPQMGMIKPPLNYNIIGFPTNKGAISIGENLTAMRSANVSGPEIATQQVSETSNNRIHNFPATFFDIYADIEKSQRLNKGPWGFEHPQIQPSIHIGMQAVPALTTGALLVNSSPLNSWTDSMGYVDVIASCTVMESQPTHFPYATSANTNPGNTVYRNNINVNSLTSAFNGLYGNAATLGSL</sequence>